<keyword id="KW-1185">Reference proteome</keyword>
<keyword id="KW-0687">Ribonucleoprotein</keyword>
<keyword id="KW-0689">Ribosomal protein</keyword>
<organism>
    <name type="scientific">Pectobacterium atrosepticum (strain SCRI 1043 / ATCC BAA-672)</name>
    <name type="common">Erwinia carotovora subsp. atroseptica</name>
    <dbReference type="NCBI Taxonomy" id="218491"/>
    <lineage>
        <taxon>Bacteria</taxon>
        <taxon>Pseudomonadati</taxon>
        <taxon>Pseudomonadota</taxon>
        <taxon>Gammaproteobacteria</taxon>
        <taxon>Enterobacterales</taxon>
        <taxon>Pectobacteriaceae</taxon>
        <taxon>Pectobacterium</taxon>
    </lineage>
</organism>
<sequence length="85" mass="9123">MAHKKAGGSTRNGRDSNAQRLGVKRFGGESVLAGNIIVRQRGTKFHAGTNVGCGKDHTLFALTDGKVQFEVKGPKNRKFISIVAE</sequence>
<accession>Q6D9C5</accession>
<protein>
    <recommendedName>
        <fullName evidence="1">Large ribosomal subunit protein bL27</fullName>
    </recommendedName>
    <alternativeName>
        <fullName evidence="3">50S ribosomal protein L27</fullName>
    </alternativeName>
</protein>
<comment type="similarity">
    <text evidence="1">Belongs to the bacterial ribosomal protein bL27 family.</text>
</comment>
<evidence type="ECO:0000255" key="1">
    <source>
        <dbReference type="HAMAP-Rule" id="MF_00539"/>
    </source>
</evidence>
<evidence type="ECO:0000256" key="2">
    <source>
        <dbReference type="SAM" id="MobiDB-lite"/>
    </source>
</evidence>
<evidence type="ECO:0000305" key="3"/>
<reference key="1">
    <citation type="journal article" date="2004" name="Proc. Natl. Acad. Sci. U.S.A.">
        <title>Genome sequence of the enterobacterial phytopathogen Erwinia carotovora subsp. atroseptica and characterization of virulence factors.</title>
        <authorList>
            <person name="Bell K.S."/>
            <person name="Sebaihia M."/>
            <person name="Pritchard L."/>
            <person name="Holden M.T.G."/>
            <person name="Hyman L.J."/>
            <person name="Holeva M.C."/>
            <person name="Thomson N.R."/>
            <person name="Bentley S.D."/>
            <person name="Churcher L.J.C."/>
            <person name="Mungall K."/>
            <person name="Atkin R."/>
            <person name="Bason N."/>
            <person name="Brooks K."/>
            <person name="Chillingworth T."/>
            <person name="Clark K."/>
            <person name="Doggett J."/>
            <person name="Fraser A."/>
            <person name="Hance Z."/>
            <person name="Hauser H."/>
            <person name="Jagels K."/>
            <person name="Moule S."/>
            <person name="Norbertczak H."/>
            <person name="Ormond D."/>
            <person name="Price C."/>
            <person name="Quail M.A."/>
            <person name="Sanders M."/>
            <person name="Walker D."/>
            <person name="Whitehead S."/>
            <person name="Salmond G.P.C."/>
            <person name="Birch P.R.J."/>
            <person name="Parkhill J."/>
            <person name="Toth I.K."/>
        </authorList>
    </citation>
    <scope>NUCLEOTIDE SEQUENCE [LARGE SCALE GENOMIC DNA]</scope>
    <source>
        <strain>SCRI 1043 / ATCC BAA-672</strain>
    </source>
</reference>
<proteinExistence type="inferred from homology"/>
<name>RL27_PECAS</name>
<gene>
    <name evidence="1" type="primary">rpmA</name>
    <name type="ordered locus">ECA0691</name>
</gene>
<dbReference type="EMBL" id="BX950851">
    <property type="protein sequence ID" value="CAG73605.1"/>
    <property type="molecule type" value="Genomic_DNA"/>
</dbReference>
<dbReference type="RefSeq" id="WP_005971498.1">
    <property type="nucleotide sequence ID" value="NC_004547.2"/>
</dbReference>
<dbReference type="SMR" id="Q6D9C5"/>
<dbReference type="STRING" id="218491.ECA0691"/>
<dbReference type="GeneID" id="93388740"/>
<dbReference type="KEGG" id="eca:ECA0691"/>
<dbReference type="eggNOG" id="COG0211">
    <property type="taxonomic scope" value="Bacteria"/>
</dbReference>
<dbReference type="HOGENOM" id="CLU_095424_4_1_6"/>
<dbReference type="OrthoDB" id="9803474at2"/>
<dbReference type="Proteomes" id="UP000007966">
    <property type="component" value="Chromosome"/>
</dbReference>
<dbReference type="GO" id="GO:0022625">
    <property type="term" value="C:cytosolic large ribosomal subunit"/>
    <property type="evidence" value="ECO:0007669"/>
    <property type="project" value="TreeGrafter"/>
</dbReference>
<dbReference type="GO" id="GO:0003735">
    <property type="term" value="F:structural constituent of ribosome"/>
    <property type="evidence" value="ECO:0007669"/>
    <property type="project" value="InterPro"/>
</dbReference>
<dbReference type="GO" id="GO:0006412">
    <property type="term" value="P:translation"/>
    <property type="evidence" value="ECO:0007669"/>
    <property type="project" value="UniProtKB-UniRule"/>
</dbReference>
<dbReference type="FunFam" id="2.40.50.100:FF:000001">
    <property type="entry name" value="50S ribosomal protein L27"/>
    <property type="match status" value="1"/>
</dbReference>
<dbReference type="Gene3D" id="2.40.50.100">
    <property type="match status" value="1"/>
</dbReference>
<dbReference type="HAMAP" id="MF_00539">
    <property type="entry name" value="Ribosomal_bL27"/>
    <property type="match status" value="1"/>
</dbReference>
<dbReference type="InterPro" id="IPR001684">
    <property type="entry name" value="Ribosomal_bL27"/>
</dbReference>
<dbReference type="InterPro" id="IPR018261">
    <property type="entry name" value="Ribosomal_bL27_CS"/>
</dbReference>
<dbReference type="NCBIfam" id="TIGR00062">
    <property type="entry name" value="L27"/>
    <property type="match status" value="1"/>
</dbReference>
<dbReference type="PANTHER" id="PTHR15893:SF0">
    <property type="entry name" value="LARGE RIBOSOMAL SUBUNIT PROTEIN BL27M"/>
    <property type="match status" value="1"/>
</dbReference>
<dbReference type="PANTHER" id="PTHR15893">
    <property type="entry name" value="RIBOSOMAL PROTEIN L27"/>
    <property type="match status" value="1"/>
</dbReference>
<dbReference type="Pfam" id="PF01016">
    <property type="entry name" value="Ribosomal_L27"/>
    <property type="match status" value="1"/>
</dbReference>
<dbReference type="PRINTS" id="PR00063">
    <property type="entry name" value="RIBOSOMALL27"/>
</dbReference>
<dbReference type="SUPFAM" id="SSF110324">
    <property type="entry name" value="Ribosomal L27 protein-like"/>
    <property type="match status" value="1"/>
</dbReference>
<dbReference type="PROSITE" id="PS00831">
    <property type="entry name" value="RIBOSOMAL_L27"/>
    <property type="match status" value="1"/>
</dbReference>
<feature type="chain" id="PRO_0000181089" description="Large ribosomal subunit protein bL27">
    <location>
        <begin position="1"/>
        <end position="85"/>
    </location>
</feature>
<feature type="region of interest" description="Disordered" evidence="2">
    <location>
        <begin position="1"/>
        <end position="21"/>
    </location>
</feature>
<feature type="compositionally biased region" description="Polar residues" evidence="2">
    <location>
        <begin position="9"/>
        <end position="19"/>
    </location>
</feature>